<feature type="chain" id="PRO_1000071441" description="N-(5'-phosphoribosyl)anthranilate isomerase">
    <location>
        <begin position="1"/>
        <end position="222"/>
    </location>
</feature>
<protein>
    <recommendedName>
        <fullName evidence="1">N-(5'-phosphoribosyl)anthranilate isomerase</fullName>
        <shortName evidence="1">PRAI</shortName>
        <ecNumber evidence="1">5.3.1.24</ecNumber>
    </recommendedName>
</protein>
<keyword id="KW-0028">Amino-acid biosynthesis</keyword>
<keyword id="KW-0057">Aromatic amino acid biosynthesis</keyword>
<keyword id="KW-0413">Isomerase</keyword>
<keyword id="KW-1185">Reference proteome</keyword>
<keyword id="KW-0822">Tryptophan biosynthesis</keyword>
<gene>
    <name evidence="1" type="primary">trpF</name>
    <name type="ordered locus">gll0754</name>
</gene>
<evidence type="ECO:0000255" key="1">
    <source>
        <dbReference type="HAMAP-Rule" id="MF_00135"/>
    </source>
</evidence>
<comment type="catalytic activity">
    <reaction evidence="1">
        <text>N-(5-phospho-beta-D-ribosyl)anthranilate = 1-(2-carboxyphenylamino)-1-deoxy-D-ribulose 5-phosphate</text>
        <dbReference type="Rhea" id="RHEA:21540"/>
        <dbReference type="ChEBI" id="CHEBI:18277"/>
        <dbReference type="ChEBI" id="CHEBI:58613"/>
        <dbReference type="EC" id="5.3.1.24"/>
    </reaction>
</comment>
<comment type="pathway">
    <text evidence="1">Amino-acid biosynthesis; L-tryptophan biosynthesis; L-tryptophan from chorismate: step 3/5.</text>
</comment>
<comment type="similarity">
    <text evidence="1">Belongs to the TrpF family.</text>
</comment>
<reference key="1">
    <citation type="journal article" date="2003" name="DNA Res.">
        <title>Complete genome structure of Gloeobacter violaceus PCC 7421, a cyanobacterium that lacks thylakoids.</title>
        <authorList>
            <person name="Nakamura Y."/>
            <person name="Kaneko T."/>
            <person name="Sato S."/>
            <person name="Mimuro M."/>
            <person name="Miyashita H."/>
            <person name="Tsuchiya T."/>
            <person name="Sasamoto S."/>
            <person name="Watanabe A."/>
            <person name="Kawashima K."/>
            <person name="Kishida Y."/>
            <person name="Kiyokawa C."/>
            <person name="Kohara M."/>
            <person name="Matsumoto M."/>
            <person name="Matsuno A."/>
            <person name="Nakazaki N."/>
            <person name="Shimpo S."/>
            <person name="Takeuchi C."/>
            <person name="Yamada M."/>
            <person name="Tabata S."/>
        </authorList>
    </citation>
    <scope>NUCLEOTIDE SEQUENCE [LARGE SCALE GENOMIC DNA]</scope>
    <source>
        <strain>ATCC 29082 / PCC 7421</strain>
    </source>
</reference>
<dbReference type="EC" id="5.3.1.24" evidence="1"/>
<dbReference type="EMBL" id="BA000045">
    <property type="protein sequence ID" value="BAC88695.1"/>
    <property type="molecule type" value="Genomic_DNA"/>
</dbReference>
<dbReference type="RefSeq" id="NP_923700.1">
    <property type="nucleotide sequence ID" value="NC_005125.1"/>
</dbReference>
<dbReference type="RefSeq" id="WP_011140756.1">
    <property type="nucleotide sequence ID" value="NC_005125.1"/>
</dbReference>
<dbReference type="SMR" id="Q7NML1"/>
<dbReference type="STRING" id="251221.gene:10758231"/>
<dbReference type="EnsemblBacteria" id="BAC88695">
    <property type="protein sequence ID" value="BAC88695"/>
    <property type="gene ID" value="BAC88695"/>
</dbReference>
<dbReference type="KEGG" id="gvi:gll0754"/>
<dbReference type="PATRIC" id="fig|251221.4.peg.768"/>
<dbReference type="eggNOG" id="COG0135">
    <property type="taxonomic scope" value="Bacteria"/>
</dbReference>
<dbReference type="HOGENOM" id="CLU_076364_2_0_3"/>
<dbReference type="InParanoid" id="Q7NML1"/>
<dbReference type="OrthoDB" id="9786954at2"/>
<dbReference type="PhylomeDB" id="Q7NML1"/>
<dbReference type="UniPathway" id="UPA00035">
    <property type="reaction ID" value="UER00042"/>
</dbReference>
<dbReference type="Proteomes" id="UP000000557">
    <property type="component" value="Chromosome"/>
</dbReference>
<dbReference type="GO" id="GO:0004640">
    <property type="term" value="F:phosphoribosylanthranilate isomerase activity"/>
    <property type="evidence" value="ECO:0000318"/>
    <property type="project" value="GO_Central"/>
</dbReference>
<dbReference type="GO" id="GO:0000162">
    <property type="term" value="P:L-tryptophan biosynthetic process"/>
    <property type="evidence" value="ECO:0000318"/>
    <property type="project" value="GO_Central"/>
</dbReference>
<dbReference type="CDD" id="cd00405">
    <property type="entry name" value="PRAI"/>
    <property type="match status" value="1"/>
</dbReference>
<dbReference type="FunFam" id="3.20.20.70:FF:000075">
    <property type="entry name" value="Tryptophan biosynthesis protein TRP1"/>
    <property type="match status" value="1"/>
</dbReference>
<dbReference type="Gene3D" id="3.20.20.70">
    <property type="entry name" value="Aldolase class I"/>
    <property type="match status" value="1"/>
</dbReference>
<dbReference type="HAMAP" id="MF_00135">
    <property type="entry name" value="PRAI"/>
    <property type="match status" value="1"/>
</dbReference>
<dbReference type="InterPro" id="IPR013785">
    <property type="entry name" value="Aldolase_TIM"/>
</dbReference>
<dbReference type="InterPro" id="IPR001240">
    <property type="entry name" value="PRAI_dom"/>
</dbReference>
<dbReference type="InterPro" id="IPR011060">
    <property type="entry name" value="RibuloseP-bd_barrel"/>
</dbReference>
<dbReference type="InterPro" id="IPR044643">
    <property type="entry name" value="TrpF_fam"/>
</dbReference>
<dbReference type="NCBIfam" id="NF002298">
    <property type="entry name" value="PRK01222.1-4"/>
    <property type="match status" value="1"/>
</dbReference>
<dbReference type="PANTHER" id="PTHR42894">
    <property type="entry name" value="N-(5'-PHOSPHORIBOSYL)ANTHRANILATE ISOMERASE"/>
    <property type="match status" value="1"/>
</dbReference>
<dbReference type="PANTHER" id="PTHR42894:SF1">
    <property type="entry name" value="N-(5'-PHOSPHORIBOSYL)ANTHRANILATE ISOMERASE"/>
    <property type="match status" value="1"/>
</dbReference>
<dbReference type="Pfam" id="PF00697">
    <property type="entry name" value="PRAI"/>
    <property type="match status" value="1"/>
</dbReference>
<dbReference type="SUPFAM" id="SSF51366">
    <property type="entry name" value="Ribulose-phoshate binding barrel"/>
    <property type="match status" value="1"/>
</dbReference>
<sequence length="222" mass="23553">MRVKICGFTDPGQAQAAARLGVHALGFVCVPGTPRYVDAARLREIAAALPPFTFKVGVFVDAPVEAMRAAVEAGELQGVQLHGEESPETCAHLARTLPGILRIKALRVREPADLEKIALYVDAIEAVLLDAWHPTQAGGTGRTLDWKALQGFCPALPWMLSGGLRADNLAQALDILTPDAVDLSSGVENGVPGQKDLSKITQILHIAQGNTGQRRPPLCDGT</sequence>
<name>TRPF_GLOVI</name>
<accession>Q7NML1</accession>
<organism>
    <name type="scientific">Gloeobacter violaceus (strain ATCC 29082 / PCC 7421)</name>
    <dbReference type="NCBI Taxonomy" id="251221"/>
    <lineage>
        <taxon>Bacteria</taxon>
        <taxon>Bacillati</taxon>
        <taxon>Cyanobacteriota</taxon>
        <taxon>Cyanophyceae</taxon>
        <taxon>Gloeobacterales</taxon>
        <taxon>Gloeobacteraceae</taxon>
        <taxon>Gloeobacter</taxon>
    </lineage>
</organism>
<proteinExistence type="inferred from homology"/>